<keyword id="KW-0027">Amidation</keyword>
<keyword id="KW-0165">Cleavage on pair of basic residues</keyword>
<keyword id="KW-0903">Direct protein sequencing</keyword>
<keyword id="KW-0372">Hormone</keyword>
<keyword id="KW-0964">Secreted</keyword>
<feature type="chain" id="PRO_0000006255" description="Urophysin" evidence="1">
    <location>
        <begin position="1" status="less than"/>
        <end position="19" status="greater than"/>
    </location>
</feature>
<feature type="peptide" id="PRO_0000006256" description="Urotensin-1">
    <location>
        <begin position="20"/>
        <end position="60"/>
    </location>
</feature>
<feature type="region of interest" description="Disordered" evidence="2">
    <location>
        <begin position="1"/>
        <end position="22"/>
    </location>
</feature>
<feature type="compositionally biased region" description="Low complexity" evidence="2">
    <location>
        <begin position="1"/>
        <end position="14"/>
    </location>
</feature>
<feature type="modified residue" description="Valine amide" evidence="3">
    <location>
        <position position="60"/>
    </location>
</feature>
<feature type="non-consecutive residues" evidence="4">
    <location>
        <begin position="19"/>
        <end position="20"/>
    </location>
</feature>
<feature type="non-terminal residue">
    <location>
        <position position="1"/>
    </location>
</feature>
<accession>P21624</accession>
<organism>
    <name type="scientific">Platichthys flesus</name>
    <name type="common">European flounder</name>
    <name type="synonym">Pleuronectes flesus</name>
    <dbReference type="NCBI Taxonomy" id="8260"/>
    <lineage>
        <taxon>Eukaryota</taxon>
        <taxon>Metazoa</taxon>
        <taxon>Chordata</taxon>
        <taxon>Craniata</taxon>
        <taxon>Vertebrata</taxon>
        <taxon>Euteleostomi</taxon>
        <taxon>Actinopterygii</taxon>
        <taxon>Neopterygii</taxon>
        <taxon>Teleostei</taxon>
        <taxon>Neoteleostei</taxon>
        <taxon>Acanthomorphata</taxon>
        <taxon>Carangaria</taxon>
        <taxon>Pleuronectiformes</taxon>
        <taxon>Pleuronectoidei</taxon>
        <taxon>Pleuronectidae</taxon>
        <taxon>Platichthys</taxon>
    </lineage>
</organism>
<protein>
    <recommendedName>
        <fullName>UI</fullName>
    </recommendedName>
    <component>
        <recommendedName>
            <fullName>Urophysin</fullName>
        </recommendedName>
    </component>
    <component>
        <recommendedName>
            <fullName>Urotensin-1</fullName>
        </recommendedName>
        <alternativeName>
            <fullName>Urotensin I</fullName>
        </alternativeName>
    </component>
</protein>
<reference key="1">
    <citation type="journal article" date="1990" name="Peptides">
        <title>Urotensin I and its N-terminal flanking peptide from the flounder, Platichthys flesus.</title>
        <authorList>
            <person name="Conlon J.M."/>
            <person name="Arnold-Reed D.E."/>
            <person name="Balment R.J."/>
        </authorList>
    </citation>
    <scope>PROTEIN SEQUENCE</scope>
    <scope>AMIDATION AT VAL-60</scope>
    <source>
        <tissue>Urophysis</tissue>
    </source>
</reference>
<dbReference type="PIR" id="A43978">
    <property type="entry name" value="A43978"/>
</dbReference>
<dbReference type="PIR" id="B43978">
    <property type="entry name" value="B43978"/>
</dbReference>
<dbReference type="SMR" id="P21624"/>
<dbReference type="GO" id="GO:0005576">
    <property type="term" value="C:extracellular region"/>
    <property type="evidence" value="ECO:0007669"/>
    <property type="project" value="UniProtKB-SubCell"/>
</dbReference>
<dbReference type="GO" id="GO:0005179">
    <property type="term" value="F:hormone activity"/>
    <property type="evidence" value="ECO:0007669"/>
    <property type="project" value="UniProtKB-KW"/>
</dbReference>
<dbReference type="Gene3D" id="6.10.250.1920">
    <property type="match status" value="1"/>
</dbReference>
<dbReference type="InterPro" id="IPR018446">
    <property type="entry name" value="Corticotropin-releasing_fac_CS"/>
</dbReference>
<dbReference type="InterPro" id="IPR000187">
    <property type="entry name" value="CRF"/>
</dbReference>
<dbReference type="InterPro" id="IPR003620">
    <property type="entry name" value="Urocortin_CRF"/>
</dbReference>
<dbReference type="PANTHER" id="PTHR15035">
    <property type="entry name" value="CORTICOLIBERIN/UROCORTIN"/>
    <property type="match status" value="1"/>
</dbReference>
<dbReference type="PANTHER" id="PTHR15035:SF11">
    <property type="entry name" value="UROCORTIN"/>
    <property type="match status" value="1"/>
</dbReference>
<dbReference type="Pfam" id="PF00473">
    <property type="entry name" value="CRF"/>
    <property type="match status" value="1"/>
</dbReference>
<dbReference type="PRINTS" id="PR01612">
    <property type="entry name" value="CRFFAMILY"/>
</dbReference>
<dbReference type="SMART" id="SM00039">
    <property type="entry name" value="CRF"/>
    <property type="match status" value="1"/>
</dbReference>
<dbReference type="PROSITE" id="PS00511">
    <property type="entry name" value="CRF"/>
    <property type="match status" value="1"/>
</dbReference>
<proteinExistence type="evidence at protein level"/>
<name>UTS1_PLAFE</name>
<evidence type="ECO:0000255" key="1"/>
<evidence type="ECO:0000256" key="2">
    <source>
        <dbReference type="SAM" id="MobiDB-lite"/>
    </source>
</evidence>
<evidence type="ECO:0000269" key="3">
    <source>
    </source>
</evidence>
<evidence type="ECO:0000305" key="4"/>
<sequence length="60" mass="6624">AAAAGDSAASDLLGDNILRSEDPPMSIDLTFHMLRNMIHMAKMEGEREQAQINRNLLDEV</sequence>
<comment type="function">
    <text>Urotensin is found in the teleost caudal neurosecretory system. It has a suggested role in osmoregulation and as a corticotropin-releasing factor. The non-hormonal portion of this precursor may be a urotensin binding protein, urophysin.</text>
</comment>
<comment type="subcellular location">
    <subcellularLocation>
        <location>Secreted</location>
    </subcellularLocation>
</comment>
<comment type="similarity">
    <text evidence="4">Belongs to the sauvagine/corticotropin-releasing factor/urotensin I family.</text>
</comment>